<evidence type="ECO:0000255" key="1">
    <source>
        <dbReference type="HAMAP-Rule" id="MF_00188"/>
    </source>
</evidence>
<evidence type="ECO:0000256" key="2">
    <source>
        <dbReference type="SAM" id="MobiDB-lite"/>
    </source>
</evidence>
<evidence type="ECO:0000305" key="3"/>
<accession>Q8YJ50</accession>
<feature type="chain" id="PRO_0000138854" description="Protease HtpX homolog">
    <location>
        <begin position="1"/>
        <end position="325"/>
    </location>
</feature>
<feature type="transmembrane region" description="Helical" evidence="1">
    <location>
        <begin position="20"/>
        <end position="40"/>
    </location>
</feature>
<feature type="transmembrane region" description="Helical" evidence="1">
    <location>
        <begin position="145"/>
        <end position="165"/>
    </location>
</feature>
<feature type="transmembrane region" description="Helical" evidence="1">
    <location>
        <begin position="173"/>
        <end position="193"/>
    </location>
</feature>
<feature type="region of interest" description="Disordered" evidence="2">
    <location>
        <begin position="286"/>
        <end position="325"/>
    </location>
</feature>
<feature type="compositionally biased region" description="Low complexity" evidence="2">
    <location>
        <begin position="306"/>
        <end position="325"/>
    </location>
</feature>
<feature type="active site" evidence="1">
    <location>
        <position position="131"/>
    </location>
</feature>
<feature type="binding site" evidence="1">
    <location>
        <position position="130"/>
    </location>
    <ligand>
        <name>Zn(2+)</name>
        <dbReference type="ChEBI" id="CHEBI:29105"/>
        <note>catalytic</note>
    </ligand>
</feature>
<feature type="binding site" evidence="1">
    <location>
        <position position="134"/>
    </location>
    <ligand>
        <name>Zn(2+)</name>
        <dbReference type="ChEBI" id="CHEBI:29105"/>
        <note>catalytic</note>
    </ligand>
</feature>
<feature type="binding site" evidence="1">
    <location>
        <position position="202"/>
    </location>
    <ligand>
        <name>Zn(2+)</name>
        <dbReference type="ChEBI" id="CHEBI:29105"/>
        <note>catalytic</note>
    </ligand>
</feature>
<proteinExistence type="inferred from homology"/>
<sequence length="325" mass="34472">MNMTKTAMLIALMTVMFMSIGYLLGGGGGMMIALVIAVAMNLFGYWNSDKMVLRMYNAQEVDERSAPEYYRMVSGLAANAGLPMPKVYIIHEDQPNAFATGRNPENAAVAATTGLLNWLSPEEVAGVMAHELAHVQNRDTLTMTIVATLAGAISMLGNFAFFLGGNRENGNGVMGVVGTLLAMIVAPFGAMIVQMAVSRTREYAADKRGAEICGNPLWLSSALGKIARGAKVIPNEEAEHNPATAHMFIINPLSGRGADNLFSTHPDTDNRIAALEQMAAETGIRSAAMTARAAAPSQNSGPWGQRSDNAGGNSNGGSRYRGPWS</sequence>
<comment type="cofactor">
    <cofactor evidence="1">
        <name>Zn(2+)</name>
        <dbReference type="ChEBI" id="CHEBI:29105"/>
    </cofactor>
    <text evidence="1">Binds 1 zinc ion per subunit.</text>
</comment>
<comment type="subcellular location">
    <subcellularLocation>
        <location evidence="1">Cell inner membrane</location>
        <topology evidence="1">Multi-pass membrane protein</topology>
    </subcellularLocation>
</comment>
<comment type="similarity">
    <text evidence="1">Belongs to the peptidase M48B family.</text>
</comment>
<comment type="sequence caution" evidence="3">
    <conflict type="erroneous initiation">
        <sequence resource="EMBL-CDS" id="AAL51418"/>
    </conflict>
    <text>Extended N-terminus.</text>
</comment>
<keyword id="KW-0997">Cell inner membrane</keyword>
<keyword id="KW-1003">Cell membrane</keyword>
<keyword id="KW-0378">Hydrolase</keyword>
<keyword id="KW-0472">Membrane</keyword>
<keyword id="KW-0479">Metal-binding</keyword>
<keyword id="KW-0482">Metalloprotease</keyword>
<keyword id="KW-0645">Protease</keyword>
<keyword id="KW-0812">Transmembrane</keyword>
<keyword id="KW-1133">Transmembrane helix</keyword>
<keyword id="KW-0862">Zinc</keyword>
<organism>
    <name type="scientific">Brucella melitensis biotype 1 (strain ATCC 23456 / CCUG 17765 / NCTC 10094 / 16M)</name>
    <dbReference type="NCBI Taxonomy" id="224914"/>
    <lineage>
        <taxon>Bacteria</taxon>
        <taxon>Pseudomonadati</taxon>
        <taxon>Pseudomonadota</taxon>
        <taxon>Alphaproteobacteria</taxon>
        <taxon>Hyphomicrobiales</taxon>
        <taxon>Brucellaceae</taxon>
        <taxon>Brucella/Ochrobactrum group</taxon>
        <taxon>Brucella</taxon>
    </lineage>
</organism>
<gene>
    <name evidence="1" type="primary">htpX</name>
    <name type="ordered locus">BMEI0236</name>
</gene>
<reference key="1">
    <citation type="journal article" date="2002" name="Proc. Natl. Acad. Sci. U.S.A.">
        <title>The genome sequence of the facultative intracellular pathogen Brucella melitensis.</title>
        <authorList>
            <person name="DelVecchio V.G."/>
            <person name="Kapatral V."/>
            <person name="Redkar R.J."/>
            <person name="Patra G."/>
            <person name="Mujer C."/>
            <person name="Los T."/>
            <person name="Ivanova N."/>
            <person name="Anderson I."/>
            <person name="Bhattacharyya A."/>
            <person name="Lykidis A."/>
            <person name="Reznik G."/>
            <person name="Jablonski L."/>
            <person name="Larsen N."/>
            <person name="D'Souza M."/>
            <person name="Bernal A."/>
            <person name="Mazur M."/>
            <person name="Goltsman E."/>
            <person name="Selkov E."/>
            <person name="Elzer P.H."/>
            <person name="Hagius S."/>
            <person name="O'Callaghan D."/>
            <person name="Letesson J.-J."/>
            <person name="Haselkorn R."/>
            <person name="Kyrpides N.C."/>
            <person name="Overbeek R."/>
        </authorList>
    </citation>
    <scope>NUCLEOTIDE SEQUENCE [LARGE SCALE GENOMIC DNA]</scope>
    <source>
        <strain>ATCC 23456 / CCUG 17765 / NCTC 10094 / 16M</strain>
    </source>
</reference>
<dbReference type="EC" id="3.4.24.-" evidence="1"/>
<dbReference type="EMBL" id="AE008917">
    <property type="protein sequence ID" value="AAL51418.1"/>
    <property type="status" value="ALT_INIT"/>
    <property type="molecule type" value="Genomic_DNA"/>
</dbReference>
<dbReference type="PIR" id="AG3281">
    <property type="entry name" value="AG3281"/>
</dbReference>
<dbReference type="RefSeq" id="WP_004684282.1">
    <property type="nucleotide sequence ID" value="NZ_GG703781.1"/>
</dbReference>
<dbReference type="SMR" id="Q8YJ50"/>
<dbReference type="GeneID" id="29592997"/>
<dbReference type="KEGG" id="bme:BMEI0236"/>
<dbReference type="KEGG" id="bmel:DK63_1195"/>
<dbReference type="PATRIC" id="fig|224914.52.peg.1263"/>
<dbReference type="eggNOG" id="COG0501">
    <property type="taxonomic scope" value="Bacteria"/>
</dbReference>
<dbReference type="PhylomeDB" id="Q8YJ50"/>
<dbReference type="Proteomes" id="UP000000419">
    <property type="component" value="Chromosome I"/>
</dbReference>
<dbReference type="GO" id="GO:0005886">
    <property type="term" value="C:plasma membrane"/>
    <property type="evidence" value="ECO:0007669"/>
    <property type="project" value="UniProtKB-SubCell"/>
</dbReference>
<dbReference type="GO" id="GO:0004222">
    <property type="term" value="F:metalloendopeptidase activity"/>
    <property type="evidence" value="ECO:0007669"/>
    <property type="project" value="UniProtKB-UniRule"/>
</dbReference>
<dbReference type="GO" id="GO:0008270">
    <property type="term" value="F:zinc ion binding"/>
    <property type="evidence" value="ECO:0007669"/>
    <property type="project" value="UniProtKB-UniRule"/>
</dbReference>
<dbReference type="GO" id="GO:0006508">
    <property type="term" value="P:proteolysis"/>
    <property type="evidence" value="ECO:0007669"/>
    <property type="project" value="UniProtKB-KW"/>
</dbReference>
<dbReference type="CDD" id="cd07336">
    <property type="entry name" value="M48B_HtpX_like"/>
    <property type="match status" value="1"/>
</dbReference>
<dbReference type="Gene3D" id="3.30.2010.10">
    <property type="entry name" value="Metalloproteases ('zincins'), catalytic domain"/>
    <property type="match status" value="1"/>
</dbReference>
<dbReference type="HAMAP" id="MF_00188">
    <property type="entry name" value="Pept_M48_protease_HtpX"/>
    <property type="match status" value="1"/>
</dbReference>
<dbReference type="InterPro" id="IPR050083">
    <property type="entry name" value="HtpX_protease"/>
</dbReference>
<dbReference type="InterPro" id="IPR022919">
    <property type="entry name" value="Pept_M48_protease_HtpX"/>
</dbReference>
<dbReference type="InterPro" id="IPR001915">
    <property type="entry name" value="Peptidase_M48"/>
</dbReference>
<dbReference type="NCBIfam" id="NF002363">
    <property type="entry name" value="PRK01345.1"/>
    <property type="match status" value="1"/>
</dbReference>
<dbReference type="NCBIfam" id="NF002826">
    <property type="entry name" value="PRK03001.1"/>
    <property type="match status" value="1"/>
</dbReference>
<dbReference type="PANTHER" id="PTHR43221">
    <property type="entry name" value="PROTEASE HTPX"/>
    <property type="match status" value="1"/>
</dbReference>
<dbReference type="PANTHER" id="PTHR43221:SF1">
    <property type="entry name" value="PROTEASE HTPX"/>
    <property type="match status" value="1"/>
</dbReference>
<dbReference type="Pfam" id="PF01435">
    <property type="entry name" value="Peptidase_M48"/>
    <property type="match status" value="1"/>
</dbReference>
<dbReference type="PROSITE" id="PS00142">
    <property type="entry name" value="ZINC_PROTEASE"/>
    <property type="match status" value="1"/>
</dbReference>
<name>HTPX_BRUME</name>
<protein>
    <recommendedName>
        <fullName evidence="1">Protease HtpX homolog</fullName>
        <ecNumber evidence="1">3.4.24.-</ecNumber>
    </recommendedName>
</protein>